<evidence type="ECO:0000255" key="1"/>
<evidence type="ECO:0000255" key="2">
    <source>
        <dbReference type="PROSITE-ProRule" id="PRU10059"/>
    </source>
</evidence>
<evidence type="ECO:0000255" key="3">
    <source>
        <dbReference type="PROSITE-ProRule" id="PRU10060"/>
    </source>
</evidence>
<evidence type="ECO:0000255" key="4">
    <source>
        <dbReference type="PROSITE-ProRule" id="PRU10140"/>
    </source>
</evidence>
<evidence type="ECO:0000256" key="5">
    <source>
        <dbReference type="SAM" id="MobiDB-lite"/>
    </source>
</evidence>
<evidence type="ECO:0000269" key="6">
    <source>
    </source>
</evidence>
<evidence type="ECO:0000305" key="7"/>
<reference key="1">
    <citation type="journal article" date="1999" name="Nature">
        <title>Sequence and analysis of chromosome 4 of the plant Arabidopsis thaliana.</title>
        <authorList>
            <person name="Mayer K.F.X."/>
            <person name="Schueller C."/>
            <person name="Wambutt R."/>
            <person name="Murphy G."/>
            <person name="Volckaert G."/>
            <person name="Pohl T."/>
            <person name="Duesterhoeft A."/>
            <person name="Stiekema W."/>
            <person name="Entian K.-D."/>
            <person name="Terryn N."/>
            <person name="Harris B."/>
            <person name="Ansorge W."/>
            <person name="Brandt P."/>
            <person name="Grivell L.A."/>
            <person name="Rieger M."/>
            <person name="Weichselgartner M."/>
            <person name="de Simone V."/>
            <person name="Obermaier B."/>
            <person name="Mache R."/>
            <person name="Mueller M."/>
            <person name="Kreis M."/>
            <person name="Delseny M."/>
            <person name="Puigdomenech P."/>
            <person name="Watson M."/>
            <person name="Schmidtheini T."/>
            <person name="Reichert B."/>
            <person name="Portetelle D."/>
            <person name="Perez-Alonso M."/>
            <person name="Boutry M."/>
            <person name="Bancroft I."/>
            <person name="Vos P."/>
            <person name="Hoheisel J."/>
            <person name="Zimmermann W."/>
            <person name="Wedler H."/>
            <person name="Ridley P."/>
            <person name="Langham S.-A."/>
            <person name="McCullagh B."/>
            <person name="Bilham L."/>
            <person name="Robben J."/>
            <person name="van der Schueren J."/>
            <person name="Grymonprez B."/>
            <person name="Chuang Y.-J."/>
            <person name="Vandenbussche F."/>
            <person name="Braeken M."/>
            <person name="Weltjens I."/>
            <person name="Voet M."/>
            <person name="Bastiaens I."/>
            <person name="Aert R."/>
            <person name="Defoor E."/>
            <person name="Weitzenegger T."/>
            <person name="Bothe G."/>
            <person name="Ramsperger U."/>
            <person name="Hilbert H."/>
            <person name="Braun M."/>
            <person name="Holzer E."/>
            <person name="Brandt A."/>
            <person name="Peters S."/>
            <person name="van Staveren M."/>
            <person name="Dirkse W."/>
            <person name="Mooijman P."/>
            <person name="Klein Lankhorst R."/>
            <person name="Rose M."/>
            <person name="Hauf J."/>
            <person name="Koetter P."/>
            <person name="Berneiser S."/>
            <person name="Hempel S."/>
            <person name="Feldpausch M."/>
            <person name="Lamberth S."/>
            <person name="Van den Daele H."/>
            <person name="De Keyser A."/>
            <person name="Buysshaert C."/>
            <person name="Gielen J."/>
            <person name="Villarroel R."/>
            <person name="De Clercq R."/>
            <person name="van Montagu M."/>
            <person name="Rogers J."/>
            <person name="Cronin A."/>
            <person name="Quail M.A."/>
            <person name="Bray-Allen S."/>
            <person name="Clark L."/>
            <person name="Doggett J."/>
            <person name="Hall S."/>
            <person name="Kay M."/>
            <person name="Lennard N."/>
            <person name="McLay K."/>
            <person name="Mayes R."/>
            <person name="Pettett A."/>
            <person name="Rajandream M.A."/>
            <person name="Lyne M."/>
            <person name="Benes V."/>
            <person name="Rechmann S."/>
            <person name="Borkova D."/>
            <person name="Bloecker H."/>
            <person name="Scharfe M."/>
            <person name="Grimm M."/>
            <person name="Loehnert T.-H."/>
            <person name="Dose S."/>
            <person name="de Haan M."/>
            <person name="Maarse A.C."/>
            <person name="Schaefer M."/>
            <person name="Mueller-Auer S."/>
            <person name="Gabel C."/>
            <person name="Fuchs M."/>
            <person name="Fartmann B."/>
            <person name="Granderath K."/>
            <person name="Dauner D."/>
            <person name="Herzl A."/>
            <person name="Neumann S."/>
            <person name="Argiriou A."/>
            <person name="Vitale D."/>
            <person name="Liguori R."/>
            <person name="Piravandi E."/>
            <person name="Massenet O."/>
            <person name="Quigley F."/>
            <person name="Clabauld G."/>
            <person name="Muendlein A."/>
            <person name="Felber R."/>
            <person name="Schnabl S."/>
            <person name="Hiller R."/>
            <person name="Schmidt W."/>
            <person name="Lecharny A."/>
            <person name="Aubourg S."/>
            <person name="Chefdor F."/>
            <person name="Cooke R."/>
            <person name="Berger C."/>
            <person name="Monfort A."/>
            <person name="Casacuberta E."/>
            <person name="Gibbons T."/>
            <person name="Weber N."/>
            <person name="Vandenbol M."/>
            <person name="Bargues M."/>
            <person name="Terol J."/>
            <person name="Torres A."/>
            <person name="Perez-Perez A."/>
            <person name="Purnelle B."/>
            <person name="Bent E."/>
            <person name="Johnson S."/>
            <person name="Tacon D."/>
            <person name="Jesse T."/>
            <person name="Heijnen L."/>
            <person name="Schwarz S."/>
            <person name="Scholler P."/>
            <person name="Heber S."/>
            <person name="Francs P."/>
            <person name="Bielke C."/>
            <person name="Frishman D."/>
            <person name="Haase D."/>
            <person name="Lemcke K."/>
            <person name="Mewes H.-W."/>
            <person name="Stocker S."/>
            <person name="Zaccaria P."/>
            <person name="Bevan M."/>
            <person name="Wilson R.K."/>
            <person name="de la Bastide M."/>
            <person name="Habermann K."/>
            <person name="Parnell L."/>
            <person name="Dedhia N."/>
            <person name="Gnoj L."/>
            <person name="Schutz K."/>
            <person name="Huang E."/>
            <person name="Spiegel L."/>
            <person name="Sekhon M."/>
            <person name="Murray J."/>
            <person name="Sheet P."/>
            <person name="Cordes M."/>
            <person name="Abu-Threideh J."/>
            <person name="Stoneking T."/>
            <person name="Kalicki J."/>
            <person name="Graves T."/>
            <person name="Harmon G."/>
            <person name="Edwards J."/>
            <person name="Latreille P."/>
            <person name="Courtney L."/>
            <person name="Cloud J."/>
            <person name="Abbott A."/>
            <person name="Scott K."/>
            <person name="Johnson D."/>
            <person name="Minx P."/>
            <person name="Bentley D."/>
            <person name="Fulton B."/>
            <person name="Miller N."/>
            <person name="Greco T."/>
            <person name="Kemp K."/>
            <person name="Kramer J."/>
            <person name="Fulton L."/>
            <person name="Mardis E."/>
            <person name="Dante M."/>
            <person name="Pepin K."/>
            <person name="Hillier L.W."/>
            <person name="Nelson J."/>
            <person name="Spieth J."/>
            <person name="Ryan E."/>
            <person name="Andrews S."/>
            <person name="Geisel C."/>
            <person name="Layman D."/>
            <person name="Du H."/>
            <person name="Ali J."/>
            <person name="Berghoff A."/>
            <person name="Jones K."/>
            <person name="Drone K."/>
            <person name="Cotton M."/>
            <person name="Joshu C."/>
            <person name="Antonoiu B."/>
            <person name="Zidanic M."/>
            <person name="Strong C."/>
            <person name="Sun H."/>
            <person name="Lamar B."/>
            <person name="Yordan C."/>
            <person name="Ma P."/>
            <person name="Zhong J."/>
            <person name="Preston R."/>
            <person name="Vil D."/>
            <person name="Shekher M."/>
            <person name="Matero A."/>
            <person name="Shah R."/>
            <person name="Swaby I.K."/>
            <person name="O'Shaughnessy A."/>
            <person name="Rodriguez M."/>
            <person name="Hoffman J."/>
            <person name="Till S."/>
            <person name="Granat S."/>
            <person name="Shohdy N."/>
            <person name="Hasegawa A."/>
            <person name="Hameed A."/>
            <person name="Lodhi M."/>
            <person name="Johnson A."/>
            <person name="Chen E."/>
            <person name="Marra M.A."/>
            <person name="Martienssen R."/>
            <person name="McCombie W.R."/>
        </authorList>
    </citation>
    <scope>NUCLEOTIDE SEQUENCE [LARGE SCALE GENOMIC DNA]</scope>
    <source>
        <strain>cv. Columbia</strain>
    </source>
</reference>
<reference key="2">
    <citation type="journal article" date="2017" name="Plant J.">
        <title>Araport11: a complete reannotation of the Arabidopsis thaliana reference genome.</title>
        <authorList>
            <person name="Cheng C.Y."/>
            <person name="Krishnakumar V."/>
            <person name="Chan A.P."/>
            <person name="Thibaud-Nissen F."/>
            <person name="Schobel S."/>
            <person name="Town C.D."/>
        </authorList>
    </citation>
    <scope>GENOME REANNOTATION</scope>
    <source>
        <strain>cv. Columbia</strain>
    </source>
</reference>
<reference key="3">
    <citation type="journal article" date="2001" name="Plant Mol. Biol.">
        <title>Two Arabidopsis thaliana genes, KOR2 and KOR3, which encode membrane-anchored endo-1,4-beta-D-glucanases, are differentially expressed in developing leaf trichomes and their support cells.</title>
        <authorList>
            <person name="Moelhoej M."/>
            <person name="Joergensen B."/>
            <person name="Ulvskov P."/>
            <person name="Borkhardt B."/>
        </authorList>
    </citation>
    <scope>TISSUE SPECIFICITY</scope>
</reference>
<reference key="4">
    <citation type="journal article" date="2004" name="J. Mol. Evol.">
        <title>Phylogenetic analysis of the plant endo-beta-1,4-glucanase gene family.</title>
        <authorList>
            <person name="Libertini E."/>
            <person name="Li Y."/>
            <person name="McQueen-Mason S.J."/>
        </authorList>
    </citation>
    <scope>GENE FAMILY</scope>
</reference>
<name>GUN21_ARATH</name>
<accession>Q9STW8</accession>
<protein>
    <recommendedName>
        <fullName>Endoglucanase 21</fullName>
        <ecNumber>3.2.1.4</ecNumber>
    </recommendedName>
    <alternativeName>
        <fullName>Endo-1,4-beta glucanase 21</fullName>
    </alternativeName>
</protein>
<sequence>MYGRDPWGGPLEINAADSMTDDDRSRNLQDLDRATPSRPLDETQQSWLLGPKVLKKKKYVDLGCILVSRKIFLWTLGTIVVTALLSGFITLIVKTLPHHHHKEPPPDNYTIALRTALKFFNAQQSGKLPKNIYNVSWRHDSCLQDGKGDPGQCYKDLVGGYYDAGDSIKFNFPMSYAMTMLSWSVIEYSAKYQAAGELEHVKELIKWGTDYFLKTFNSSADNIYVMVEQVGSGVSGRGSELHNDHYCWMRPEDIHYKRTVSQCYSSCSDLAAEMAAALASASIVFKDNRLYSKNLVHGAKTLYRFATTSRNRYSQNGKESSKFYNSSMFEDELLWGGAWLYYATGNVTYLERVTSHHMAEKAGAFGNSPYYGVFSWDNKLPGAQLLLTRMRLFLSPGYPYEDMLSEFHNQTGRVMCSYLPYYKKFNRTNGGLIQLNHGAPQPLQYVANAAFLAALFSDYLEAADTPGWYCGPNFYTTEFLRNFSRSQIDYILGKNPRKMSYVVGYGQRYPKQVHHRGASIPKNMKETCTGGFKWKKSKKNNPNAINGAMVAGPDKHDGFHDIRTNYNYTEPTLAGNAGLVAALVALSGEKAVGGIDKNTMFSAVPPLVMATPPPPAPWTP</sequence>
<organism>
    <name type="scientific">Arabidopsis thaliana</name>
    <name type="common">Mouse-ear cress</name>
    <dbReference type="NCBI Taxonomy" id="3702"/>
    <lineage>
        <taxon>Eukaryota</taxon>
        <taxon>Viridiplantae</taxon>
        <taxon>Streptophyta</taxon>
        <taxon>Embryophyta</taxon>
        <taxon>Tracheophyta</taxon>
        <taxon>Spermatophyta</taxon>
        <taxon>Magnoliopsida</taxon>
        <taxon>eudicotyledons</taxon>
        <taxon>Gunneridae</taxon>
        <taxon>Pentapetalae</taxon>
        <taxon>rosids</taxon>
        <taxon>malvids</taxon>
        <taxon>Brassicales</taxon>
        <taxon>Brassicaceae</taxon>
        <taxon>Camelineae</taxon>
        <taxon>Arabidopsis</taxon>
    </lineage>
</organism>
<dbReference type="EC" id="3.2.1.4"/>
<dbReference type="EMBL" id="AL078637">
    <property type="protein sequence ID" value="CAB45061.1"/>
    <property type="molecule type" value="Genomic_DNA"/>
</dbReference>
<dbReference type="EMBL" id="AL161561">
    <property type="protein sequence ID" value="CAB79336.1"/>
    <property type="molecule type" value="Genomic_DNA"/>
</dbReference>
<dbReference type="EMBL" id="CP002687">
    <property type="protein sequence ID" value="AEE84879.1"/>
    <property type="molecule type" value="Genomic_DNA"/>
</dbReference>
<dbReference type="PIR" id="T09889">
    <property type="entry name" value="T09889"/>
</dbReference>
<dbReference type="SMR" id="Q9STW8"/>
<dbReference type="FunCoup" id="Q9STW8">
    <property type="interactions" value="170"/>
</dbReference>
<dbReference type="STRING" id="3702.Q9STW8"/>
<dbReference type="CAZy" id="GH9">
    <property type="family name" value="Glycoside Hydrolase Family 9"/>
</dbReference>
<dbReference type="GlyCosmos" id="Q9STW8">
    <property type="glycosylation" value="9 sites, No reported glycans"/>
</dbReference>
<dbReference type="GlyGen" id="Q9STW8">
    <property type="glycosylation" value="9 sites"/>
</dbReference>
<dbReference type="PaxDb" id="3702-AT4G24260.1"/>
<dbReference type="ProteomicsDB" id="247271"/>
<dbReference type="EnsemblPlants" id="AT4G24260.1">
    <property type="protein sequence ID" value="AT4G24260.1"/>
    <property type="gene ID" value="AT4G24260"/>
</dbReference>
<dbReference type="GeneID" id="828527"/>
<dbReference type="Gramene" id="AT4G24260.1">
    <property type="protein sequence ID" value="AT4G24260.1"/>
    <property type="gene ID" value="AT4G24260"/>
</dbReference>
<dbReference type="KEGG" id="ath:AT4G24260"/>
<dbReference type="Araport" id="AT4G24260"/>
<dbReference type="TAIR" id="AT4G24260">
    <property type="gene designation" value="GH9A3"/>
</dbReference>
<dbReference type="eggNOG" id="ENOG502QUUK">
    <property type="taxonomic scope" value="Eukaryota"/>
</dbReference>
<dbReference type="HOGENOM" id="CLU_008926_1_3_1"/>
<dbReference type="InParanoid" id="Q9STW8"/>
<dbReference type="OMA" id="HSAIMIF"/>
<dbReference type="PhylomeDB" id="Q9STW8"/>
<dbReference type="BioCyc" id="ARA:AT4G24260-MONOMER"/>
<dbReference type="PRO" id="PR:Q9STW8"/>
<dbReference type="Proteomes" id="UP000006548">
    <property type="component" value="Chromosome 4"/>
</dbReference>
<dbReference type="ExpressionAtlas" id="Q9STW8">
    <property type="expression patterns" value="baseline and differential"/>
</dbReference>
<dbReference type="GO" id="GO:0005886">
    <property type="term" value="C:plasma membrane"/>
    <property type="evidence" value="ECO:0007669"/>
    <property type="project" value="UniProtKB-SubCell"/>
</dbReference>
<dbReference type="GO" id="GO:0008810">
    <property type="term" value="F:cellulase activity"/>
    <property type="evidence" value="ECO:0007669"/>
    <property type="project" value="UniProtKB-EC"/>
</dbReference>
<dbReference type="GO" id="GO:0071555">
    <property type="term" value="P:cell wall organization"/>
    <property type="evidence" value="ECO:0007669"/>
    <property type="project" value="UniProtKB-KW"/>
</dbReference>
<dbReference type="GO" id="GO:0030245">
    <property type="term" value="P:cellulose catabolic process"/>
    <property type="evidence" value="ECO:0007669"/>
    <property type="project" value="UniProtKB-KW"/>
</dbReference>
<dbReference type="GO" id="GO:0009624">
    <property type="term" value="P:response to nematode"/>
    <property type="evidence" value="ECO:0000270"/>
    <property type="project" value="TAIR"/>
</dbReference>
<dbReference type="FunFam" id="1.50.10.10:FF:000020">
    <property type="entry name" value="Endoglucanase"/>
    <property type="match status" value="1"/>
</dbReference>
<dbReference type="Gene3D" id="1.50.10.10">
    <property type="match status" value="1"/>
</dbReference>
<dbReference type="InterPro" id="IPR008928">
    <property type="entry name" value="6-hairpin_glycosidase_sf"/>
</dbReference>
<dbReference type="InterPro" id="IPR012341">
    <property type="entry name" value="6hp_glycosidase-like_sf"/>
</dbReference>
<dbReference type="InterPro" id="IPR001701">
    <property type="entry name" value="Glyco_hydro_9"/>
</dbReference>
<dbReference type="InterPro" id="IPR033126">
    <property type="entry name" value="Glyco_hydro_9_Asp/Glu_AS"/>
</dbReference>
<dbReference type="InterPro" id="IPR018221">
    <property type="entry name" value="Glyco_hydro_9_His_AS"/>
</dbReference>
<dbReference type="PANTHER" id="PTHR22298">
    <property type="entry name" value="ENDO-1,4-BETA-GLUCANASE"/>
    <property type="match status" value="1"/>
</dbReference>
<dbReference type="Pfam" id="PF00759">
    <property type="entry name" value="Glyco_hydro_9"/>
    <property type="match status" value="1"/>
</dbReference>
<dbReference type="SUPFAM" id="SSF48208">
    <property type="entry name" value="Six-hairpin glycosidases"/>
    <property type="match status" value="1"/>
</dbReference>
<dbReference type="PROSITE" id="PS60032">
    <property type="entry name" value="GH9_1"/>
    <property type="match status" value="1"/>
</dbReference>
<dbReference type="PROSITE" id="PS00592">
    <property type="entry name" value="GH9_2"/>
    <property type="match status" value="1"/>
</dbReference>
<dbReference type="PROSITE" id="PS00698">
    <property type="entry name" value="GH9_3"/>
    <property type="match status" value="1"/>
</dbReference>
<feature type="chain" id="PRO_0000249273" description="Endoglucanase 21">
    <location>
        <begin position="1"/>
        <end position="620"/>
    </location>
</feature>
<feature type="topological domain" description="Cytoplasmic" evidence="1">
    <location>
        <begin position="1"/>
        <end position="70"/>
    </location>
</feature>
<feature type="transmembrane region" description="Helical; Signal-anchor for type II membrane protein" evidence="1">
    <location>
        <begin position="71"/>
        <end position="91"/>
    </location>
</feature>
<feature type="topological domain" description="Extracellular" evidence="1">
    <location>
        <begin position="92"/>
        <end position="620"/>
    </location>
</feature>
<feature type="region of interest" description="Disordered" evidence="5">
    <location>
        <begin position="1"/>
        <end position="39"/>
    </location>
</feature>
<feature type="compositionally biased region" description="Basic and acidic residues" evidence="5">
    <location>
        <begin position="21"/>
        <end position="39"/>
    </location>
</feature>
<feature type="active site" description="Nucleophile" evidence="4">
    <location>
        <position position="166"/>
    </location>
</feature>
<feature type="active site" evidence="2">
    <location>
        <position position="514"/>
    </location>
</feature>
<feature type="active site" evidence="3">
    <location>
        <position position="561"/>
    </location>
</feature>
<feature type="active site" evidence="3">
    <location>
        <position position="570"/>
    </location>
</feature>
<feature type="glycosylation site" description="N-linked (GlcNAc...) asparagine" evidence="1">
    <location>
        <position position="108"/>
    </location>
</feature>
<feature type="glycosylation site" description="N-linked (GlcNAc...) asparagine" evidence="1">
    <location>
        <position position="134"/>
    </location>
</feature>
<feature type="glycosylation site" description="N-linked (GlcNAc...) asparagine" evidence="1">
    <location>
        <position position="217"/>
    </location>
</feature>
<feature type="glycosylation site" description="N-linked (GlcNAc...) asparagine" evidence="1">
    <location>
        <position position="325"/>
    </location>
</feature>
<feature type="glycosylation site" description="N-linked (GlcNAc...) asparagine" evidence="1">
    <location>
        <position position="346"/>
    </location>
</feature>
<feature type="glycosylation site" description="N-linked (GlcNAc...) asparagine" evidence="1">
    <location>
        <position position="409"/>
    </location>
</feature>
<feature type="glycosylation site" description="N-linked (GlcNAc...) asparagine" evidence="1">
    <location>
        <position position="426"/>
    </location>
</feature>
<feature type="glycosylation site" description="N-linked (GlcNAc...) asparagine" evidence="1">
    <location>
        <position position="482"/>
    </location>
</feature>
<feature type="glycosylation site" description="N-linked (GlcNAc...) asparagine" evidence="1">
    <location>
        <position position="567"/>
    </location>
</feature>
<comment type="catalytic activity">
    <reaction>
        <text>Endohydrolysis of (1-&gt;4)-beta-D-glucosidic linkages in cellulose, lichenin and cereal beta-D-glucans.</text>
        <dbReference type="EC" id="3.2.1.4"/>
    </reaction>
</comment>
<comment type="subcellular location">
    <subcellularLocation>
        <location evidence="7">Cell membrane</location>
        <topology evidence="7">Single-pass type II membrane protein</topology>
    </subcellularLocation>
</comment>
<comment type="tissue specificity">
    <text evidence="6">Expressed in conductive tissues of young roots, cotyledons, rosette leaves, cauline leaves and sepals. Expressed in the leaf trichome support cells.</text>
</comment>
<comment type="similarity">
    <text evidence="4 7">Belongs to the glycosyl hydrolase 9 (cellulase E) family.</text>
</comment>
<keyword id="KW-0119">Carbohydrate metabolism</keyword>
<keyword id="KW-1003">Cell membrane</keyword>
<keyword id="KW-0961">Cell wall biogenesis/degradation</keyword>
<keyword id="KW-0136">Cellulose degradation</keyword>
<keyword id="KW-0325">Glycoprotein</keyword>
<keyword id="KW-0326">Glycosidase</keyword>
<keyword id="KW-0378">Hydrolase</keyword>
<keyword id="KW-0472">Membrane</keyword>
<keyword id="KW-0624">Polysaccharide degradation</keyword>
<keyword id="KW-1185">Reference proteome</keyword>
<keyword id="KW-0735">Signal-anchor</keyword>
<keyword id="KW-0812">Transmembrane</keyword>
<keyword id="KW-1133">Transmembrane helix</keyword>
<proteinExistence type="evidence at transcript level"/>
<gene>
    <name type="primary">KOR3</name>
    <name type="ordered locus">At4g24260</name>
    <name type="ORF">T22A6.90</name>
</gene>